<keyword id="KW-0963">Cytoplasm</keyword>
<keyword id="KW-0274">FAD</keyword>
<keyword id="KW-0285">Flavoprotein</keyword>
<keyword id="KW-0288">FMN</keyword>
<keyword id="KW-0496">Mitochondrion</keyword>
<keyword id="KW-0521">NADP</keyword>
<keyword id="KW-0560">Oxidoreductase</keyword>
<keyword id="KW-1185">Reference proteome</keyword>
<sequence>MSFLLNLIPAISHTNHDEMHEPNQTHLHRHADTSPTNQHNTSHKMTTTEPIHVTTGSGESRDHTEPRHVTPTSPNALDGRRITIAYATETGNAQDFATLLGNACTRLRFESHVVQMNDLSPETLAQDVSVLVIVCSTTGQGEIPLNGKKLWKFLLRKKLPPNLLSHVTFTTFGLGDSSYPRFNWAIRKIHKRLSQLGASEVGSRGECDDMSPDSIETMYNEWQARFCESLLKAFPLPEGVEVIPGEKLLPAKFPVKVLTNKPKRDTSDADHVACTRKDVLQGTVVGNERVTAKGHFQDVRFFQIDANTEDNDMADLSRDFSKLNSDSRDLHDVSRAVSAGSSIDFSTGDTVSLFPQNSVADVDLLLRDQGWEDIADYKLDAPSLPPIEGGYVTPLTLRSLITHHLDIMGIPRQSFFTYVFHFATSERQKERLQEFSQPGEGLEDLFDYANRPRRSILEVVTEFDSLKIPLKYVLDVFPLMRPRLFSISQKAHTMPIQLCVAIVKYQTIIKRIREGVLTRWLGGLAIGQKIVFTKHSTPIPDLDNYDVIMVAPGTGVAPMRSLILSRESEKETVLFFGNRFREKDFLFQADLEKAVGDKKLNLFTSFSRDENSGGYVQQEMYRQKELVARVLCSKQGVLYVCGSSGKMPREVRITVVTCIQEVNGWTEEQAEEWVKGMEKSGRYLQETW</sequence>
<comment type="function">
    <text evidence="1">NADPH-dependent reductase which is a central component of the cytosolic iron-sulfur (Fe-S) protein assembly (CIA) machinery. Transfers electrons from NADPH via its FAD and FMN prosthetic groups to the [2Fe-2S] cluster of DRE2, another key component of the CIA machinery. In turn, this reduced cluster provides electrons for assembly of cytosolic iron-sulfur cluster proteins. Positively controls H(2)O(2)-induced cell death.</text>
</comment>
<comment type="catalytic activity">
    <reaction evidence="1">
        <text>2 oxidized [2Fe-2S]-[protein] + NADPH = 2 reduced [2Fe-2S]-[protein] + NADP(+) + H(+)</text>
        <dbReference type="Rhea" id="RHEA:67716"/>
        <dbReference type="Rhea" id="RHEA-COMP:17327"/>
        <dbReference type="Rhea" id="RHEA-COMP:17328"/>
        <dbReference type="ChEBI" id="CHEBI:15378"/>
        <dbReference type="ChEBI" id="CHEBI:33737"/>
        <dbReference type="ChEBI" id="CHEBI:33738"/>
        <dbReference type="ChEBI" id="CHEBI:57783"/>
        <dbReference type="ChEBI" id="CHEBI:58349"/>
    </reaction>
    <physiologicalReaction direction="left-to-right" evidence="1">
        <dbReference type="Rhea" id="RHEA:67717"/>
    </physiologicalReaction>
</comment>
<comment type="cofactor">
    <cofactor evidence="1">
        <name>FAD</name>
        <dbReference type="ChEBI" id="CHEBI:57692"/>
    </cofactor>
</comment>
<comment type="cofactor">
    <cofactor evidence="1">
        <name>FMN</name>
        <dbReference type="ChEBI" id="CHEBI:58210"/>
    </cofactor>
</comment>
<comment type="subunit">
    <text evidence="1">Interacts with DRE2; as part of the cytosolic iron-sulfur (Fe-S) protein assembly (CIA) machinery.</text>
</comment>
<comment type="subcellular location">
    <subcellularLocation>
        <location evidence="1">Cytoplasm</location>
    </subcellularLocation>
    <subcellularLocation>
        <location evidence="1">Mitochondrion</location>
    </subcellularLocation>
    <text evidence="1">Relocalizes to mitochondria after H(2)O(2) exposure.</text>
</comment>
<comment type="similarity">
    <text evidence="1">Belongs to the NADPH-dependent diflavin oxidoreductase NDOR1 family.</text>
</comment>
<comment type="similarity">
    <text evidence="1">In the N-terminal section; belongs to the flavodoxin family.</text>
</comment>
<comment type="similarity">
    <text evidence="1">In the C-terminal section; belongs to the flavoprotein pyridine nucleotide cytochrome reductase family.</text>
</comment>
<evidence type="ECO:0000255" key="1">
    <source>
        <dbReference type="HAMAP-Rule" id="MF_03178"/>
    </source>
</evidence>
<evidence type="ECO:0000256" key="2">
    <source>
        <dbReference type="SAM" id="MobiDB-lite"/>
    </source>
</evidence>
<accession>Q6CCH0</accession>
<organism>
    <name type="scientific">Yarrowia lipolytica (strain CLIB 122 / E 150)</name>
    <name type="common">Yeast</name>
    <name type="synonym">Candida lipolytica</name>
    <dbReference type="NCBI Taxonomy" id="284591"/>
    <lineage>
        <taxon>Eukaryota</taxon>
        <taxon>Fungi</taxon>
        <taxon>Dikarya</taxon>
        <taxon>Ascomycota</taxon>
        <taxon>Saccharomycotina</taxon>
        <taxon>Dipodascomycetes</taxon>
        <taxon>Dipodascales</taxon>
        <taxon>Dipodascales incertae sedis</taxon>
        <taxon>Yarrowia</taxon>
    </lineage>
</organism>
<protein>
    <recommendedName>
        <fullName evidence="1">NADPH-dependent diflavin oxidoreductase 1</fullName>
        <ecNumber evidence="1">1.18.1.-</ecNumber>
    </recommendedName>
    <alternativeName>
        <fullName evidence="1">NADPH-dependent FMN and FAD-containing oxidoreductase</fullName>
    </alternativeName>
</protein>
<name>NDOR1_YARLI</name>
<reference key="1">
    <citation type="journal article" date="2004" name="Nature">
        <title>Genome evolution in yeasts.</title>
        <authorList>
            <person name="Dujon B."/>
            <person name="Sherman D."/>
            <person name="Fischer G."/>
            <person name="Durrens P."/>
            <person name="Casaregola S."/>
            <person name="Lafontaine I."/>
            <person name="de Montigny J."/>
            <person name="Marck C."/>
            <person name="Neuveglise C."/>
            <person name="Talla E."/>
            <person name="Goffard N."/>
            <person name="Frangeul L."/>
            <person name="Aigle M."/>
            <person name="Anthouard V."/>
            <person name="Babour A."/>
            <person name="Barbe V."/>
            <person name="Barnay S."/>
            <person name="Blanchin S."/>
            <person name="Beckerich J.-M."/>
            <person name="Beyne E."/>
            <person name="Bleykasten C."/>
            <person name="Boisrame A."/>
            <person name="Boyer J."/>
            <person name="Cattolico L."/>
            <person name="Confanioleri F."/>
            <person name="de Daruvar A."/>
            <person name="Despons L."/>
            <person name="Fabre E."/>
            <person name="Fairhead C."/>
            <person name="Ferry-Dumazet H."/>
            <person name="Groppi A."/>
            <person name="Hantraye F."/>
            <person name="Hennequin C."/>
            <person name="Jauniaux N."/>
            <person name="Joyet P."/>
            <person name="Kachouri R."/>
            <person name="Kerrest A."/>
            <person name="Koszul R."/>
            <person name="Lemaire M."/>
            <person name="Lesur I."/>
            <person name="Ma L."/>
            <person name="Muller H."/>
            <person name="Nicaud J.-M."/>
            <person name="Nikolski M."/>
            <person name="Oztas S."/>
            <person name="Ozier-Kalogeropoulos O."/>
            <person name="Pellenz S."/>
            <person name="Potier S."/>
            <person name="Richard G.-F."/>
            <person name="Straub M.-L."/>
            <person name="Suleau A."/>
            <person name="Swennen D."/>
            <person name="Tekaia F."/>
            <person name="Wesolowski-Louvel M."/>
            <person name="Westhof E."/>
            <person name="Wirth B."/>
            <person name="Zeniou-Meyer M."/>
            <person name="Zivanovic Y."/>
            <person name="Bolotin-Fukuhara M."/>
            <person name="Thierry A."/>
            <person name="Bouchier C."/>
            <person name="Caudron B."/>
            <person name="Scarpelli C."/>
            <person name="Gaillardin C."/>
            <person name="Weissenbach J."/>
            <person name="Wincker P."/>
            <person name="Souciet J.-L."/>
        </authorList>
    </citation>
    <scope>NUCLEOTIDE SEQUENCE [LARGE SCALE GENOMIC DNA]</scope>
    <source>
        <strain>CLIB 122 / E 150</strain>
    </source>
</reference>
<feature type="chain" id="PRO_0000167623" description="NADPH-dependent diflavin oxidoreductase 1">
    <location>
        <begin position="1"/>
        <end position="688"/>
    </location>
</feature>
<feature type="domain" description="Flavodoxin-like" evidence="1">
    <location>
        <begin position="82"/>
        <end position="227"/>
    </location>
</feature>
<feature type="domain" description="FAD-binding FR-type" evidence="1">
    <location>
        <begin position="277"/>
        <end position="543"/>
    </location>
</feature>
<feature type="region of interest" description="Disordered" evidence="2">
    <location>
        <begin position="26"/>
        <end position="76"/>
    </location>
</feature>
<feature type="compositionally biased region" description="Polar residues" evidence="2">
    <location>
        <begin position="33"/>
        <end position="58"/>
    </location>
</feature>
<feature type="compositionally biased region" description="Basic and acidic residues" evidence="2">
    <location>
        <begin position="59"/>
        <end position="68"/>
    </location>
</feature>
<feature type="binding site" evidence="1">
    <location>
        <begin position="88"/>
        <end position="93"/>
    </location>
    <ligand>
        <name>FMN</name>
        <dbReference type="ChEBI" id="CHEBI:58210"/>
    </ligand>
</feature>
<feature type="binding site" evidence="1">
    <location>
        <begin position="136"/>
        <end position="139"/>
    </location>
    <ligand>
        <name>FMN</name>
        <dbReference type="ChEBI" id="CHEBI:58210"/>
    </ligand>
</feature>
<feature type="binding site" evidence="1">
    <location>
        <begin position="174"/>
        <end position="183"/>
    </location>
    <ligand>
        <name>FMN</name>
        <dbReference type="ChEBI" id="CHEBI:58210"/>
    </ligand>
</feature>
<feature type="binding site" evidence="1">
    <location>
        <position position="209"/>
    </location>
    <ligand>
        <name>FMN</name>
        <dbReference type="ChEBI" id="CHEBI:58210"/>
    </ligand>
</feature>
<feature type="binding site" evidence="1">
    <location>
        <position position="453"/>
    </location>
    <ligand>
        <name>FAD</name>
        <dbReference type="ChEBI" id="CHEBI:57692"/>
    </ligand>
</feature>
<feature type="binding site" evidence="1">
    <location>
        <begin position="483"/>
        <end position="486"/>
    </location>
    <ligand>
        <name>FAD</name>
        <dbReference type="ChEBI" id="CHEBI:57692"/>
    </ligand>
</feature>
<feature type="binding site" evidence="1">
    <location>
        <begin position="515"/>
        <end position="518"/>
    </location>
    <ligand>
        <name>FAD</name>
        <dbReference type="ChEBI" id="CHEBI:57692"/>
    </ligand>
</feature>
<feature type="binding site" evidence="1">
    <location>
        <position position="554"/>
    </location>
    <ligand>
        <name>NADP(+)</name>
        <dbReference type="ChEBI" id="CHEBI:58349"/>
    </ligand>
</feature>
<feature type="binding site" evidence="1">
    <location>
        <begin position="607"/>
        <end position="608"/>
    </location>
    <ligand>
        <name>NADP(+)</name>
        <dbReference type="ChEBI" id="CHEBI:58349"/>
    </ligand>
</feature>
<feature type="binding site" evidence="1">
    <location>
        <begin position="613"/>
        <end position="617"/>
    </location>
    <ligand>
        <name>NADP(+)</name>
        <dbReference type="ChEBI" id="CHEBI:58349"/>
    </ligand>
</feature>
<feature type="binding site" evidence="1">
    <location>
        <position position="688"/>
    </location>
    <ligand>
        <name>FAD</name>
        <dbReference type="ChEBI" id="CHEBI:57692"/>
    </ligand>
</feature>
<dbReference type="EC" id="1.18.1.-" evidence="1"/>
<dbReference type="EMBL" id="CR382129">
    <property type="protein sequence ID" value="CAG81947.1"/>
    <property type="molecule type" value="Genomic_DNA"/>
</dbReference>
<dbReference type="RefSeq" id="XP_501642.1">
    <property type="nucleotide sequence ID" value="XM_501642.1"/>
</dbReference>
<dbReference type="SMR" id="Q6CCH0"/>
<dbReference type="FunCoup" id="Q6CCH0">
    <property type="interactions" value="768"/>
</dbReference>
<dbReference type="STRING" id="284591.Q6CCH0"/>
<dbReference type="EnsemblFungi" id="CAG81947">
    <property type="protein sequence ID" value="CAG81947"/>
    <property type="gene ID" value="YALI0_C09460g"/>
</dbReference>
<dbReference type="KEGG" id="yli:2909766"/>
<dbReference type="VEuPathDB" id="FungiDB:YALI0_C09460g"/>
<dbReference type="HOGENOM" id="CLU_001570_17_6_1"/>
<dbReference type="InParanoid" id="Q6CCH0"/>
<dbReference type="OMA" id="DIMSIPR"/>
<dbReference type="OrthoDB" id="113176at4891"/>
<dbReference type="Proteomes" id="UP000001300">
    <property type="component" value="Chromosome C"/>
</dbReference>
<dbReference type="GO" id="GO:0005829">
    <property type="term" value="C:cytosol"/>
    <property type="evidence" value="ECO:0000318"/>
    <property type="project" value="GO_Central"/>
</dbReference>
<dbReference type="GO" id="GO:0005739">
    <property type="term" value="C:mitochondrion"/>
    <property type="evidence" value="ECO:0007669"/>
    <property type="project" value="UniProtKB-SubCell"/>
</dbReference>
<dbReference type="GO" id="GO:0050660">
    <property type="term" value="F:flavin adenine dinucleotide binding"/>
    <property type="evidence" value="ECO:0000318"/>
    <property type="project" value="GO_Central"/>
</dbReference>
<dbReference type="GO" id="GO:0010181">
    <property type="term" value="F:FMN binding"/>
    <property type="evidence" value="ECO:0000318"/>
    <property type="project" value="GO_Central"/>
</dbReference>
<dbReference type="GO" id="GO:0050661">
    <property type="term" value="F:NADP binding"/>
    <property type="evidence" value="ECO:0007669"/>
    <property type="project" value="UniProtKB-UniRule"/>
</dbReference>
<dbReference type="GO" id="GO:0003958">
    <property type="term" value="F:NADPH-hemoprotein reductase activity"/>
    <property type="evidence" value="ECO:0007669"/>
    <property type="project" value="InterPro"/>
</dbReference>
<dbReference type="GO" id="GO:0016491">
    <property type="term" value="F:oxidoreductase activity"/>
    <property type="evidence" value="ECO:0000318"/>
    <property type="project" value="GO_Central"/>
</dbReference>
<dbReference type="GO" id="GO:0016226">
    <property type="term" value="P:iron-sulfur cluster assembly"/>
    <property type="evidence" value="ECO:0007669"/>
    <property type="project" value="UniProtKB-UniRule"/>
</dbReference>
<dbReference type="FunFam" id="3.40.50.80:FF:000030">
    <property type="entry name" value="NADPH-dependent diflavin oxidoreductase 1"/>
    <property type="match status" value="1"/>
</dbReference>
<dbReference type="Gene3D" id="3.40.50.360">
    <property type="match status" value="1"/>
</dbReference>
<dbReference type="Gene3D" id="1.20.990.10">
    <property type="entry name" value="NADPH-cytochrome p450 Reductase, Chain A, domain 3"/>
    <property type="match status" value="1"/>
</dbReference>
<dbReference type="Gene3D" id="3.40.50.80">
    <property type="entry name" value="Nucleotide-binding domain of ferredoxin-NADP reductase (FNR) module"/>
    <property type="match status" value="1"/>
</dbReference>
<dbReference type="Gene3D" id="2.40.30.10">
    <property type="entry name" value="Translation factors"/>
    <property type="match status" value="1"/>
</dbReference>
<dbReference type="HAMAP" id="MF_03178">
    <property type="entry name" value="NDOR1"/>
    <property type="match status" value="1"/>
</dbReference>
<dbReference type="InterPro" id="IPR003097">
    <property type="entry name" value="CysJ-like_FAD-binding"/>
</dbReference>
<dbReference type="InterPro" id="IPR017927">
    <property type="entry name" value="FAD-bd_FR_type"/>
</dbReference>
<dbReference type="InterPro" id="IPR001094">
    <property type="entry name" value="Flavdoxin-like"/>
</dbReference>
<dbReference type="InterPro" id="IPR008254">
    <property type="entry name" value="Flavodoxin/NO_synth"/>
</dbReference>
<dbReference type="InterPro" id="IPR001709">
    <property type="entry name" value="Flavoprot_Pyr_Nucl_cyt_Rdtase"/>
</dbReference>
<dbReference type="InterPro" id="IPR029039">
    <property type="entry name" value="Flavoprotein-like_sf"/>
</dbReference>
<dbReference type="InterPro" id="IPR039261">
    <property type="entry name" value="FNR_nucleotide-bd"/>
</dbReference>
<dbReference type="InterPro" id="IPR023173">
    <property type="entry name" value="NADPH_Cyt_P450_Rdtase_alpha"/>
</dbReference>
<dbReference type="InterPro" id="IPR028879">
    <property type="entry name" value="NDOR1"/>
</dbReference>
<dbReference type="InterPro" id="IPR001433">
    <property type="entry name" value="OxRdtase_FAD/NAD-bd"/>
</dbReference>
<dbReference type="InterPro" id="IPR017938">
    <property type="entry name" value="Riboflavin_synthase-like_b-brl"/>
</dbReference>
<dbReference type="PANTHER" id="PTHR19384:SF10">
    <property type="entry name" value="NADPH-DEPENDENT DIFLAVIN OXIDOREDUCTASE 1"/>
    <property type="match status" value="1"/>
</dbReference>
<dbReference type="PANTHER" id="PTHR19384">
    <property type="entry name" value="NITRIC OXIDE SYNTHASE-RELATED"/>
    <property type="match status" value="1"/>
</dbReference>
<dbReference type="Pfam" id="PF00667">
    <property type="entry name" value="FAD_binding_1"/>
    <property type="match status" value="1"/>
</dbReference>
<dbReference type="Pfam" id="PF00258">
    <property type="entry name" value="Flavodoxin_1"/>
    <property type="match status" value="1"/>
</dbReference>
<dbReference type="Pfam" id="PF00175">
    <property type="entry name" value="NAD_binding_1"/>
    <property type="match status" value="1"/>
</dbReference>
<dbReference type="PRINTS" id="PR00369">
    <property type="entry name" value="FLAVODOXIN"/>
</dbReference>
<dbReference type="PRINTS" id="PR00371">
    <property type="entry name" value="FPNCR"/>
</dbReference>
<dbReference type="SUPFAM" id="SSF52343">
    <property type="entry name" value="Ferredoxin reductase-like, C-terminal NADP-linked domain"/>
    <property type="match status" value="1"/>
</dbReference>
<dbReference type="SUPFAM" id="SSF52218">
    <property type="entry name" value="Flavoproteins"/>
    <property type="match status" value="1"/>
</dbReference>
<dbReference type="SUPFAM" id="SSF63380">
    <property type="entry name" value="Riboflavin synthase domain-like"/>
    <property type="match status" value="1"/>
</dbReference>
<dbReference type="PROSITE" id="PS51384">
    <property type="entry name" value="FAD_FR"/>
    <property type="match status" value="1"/>
</dbReference>
<dbReference type="PROSITE" id="PS50902">
    <property type="entry name" value="FLAVODOXIN_LIKE"/>
    <property type="match status" value="1"/>
</dbReference>
<proteinExistence type="inferred from homology"/>
<gene>
    <name evidence="1" type="primary">TAH18</name>
    <name type="ordered locus">YALI0C09460g</name>
</gene>